<sequence>MKKIDAIIKPFKLDDVREALAEVGITGMTVTEVKGFGRQKGHTELYRGAEYMVDFLPKVKIEIVVPDDIVDTCVDTIIRTAQTGKIGDGKIFVFDVARVIRIRTGEEDDAAI</sequence>
<feature type="chain" id="PRO_0000139771" description="Nitrogen regulatory protein P-II 1">
    <location>
        <begin position="1"/>
        <end position="112"/>
    </location>
</feature>
<feature type="modified residue" description="O-UMP-tyrosine" evidence="1 2">
    <location>
        <position position="51"/>
    </location>
</feature>
<feature type="sequence conflict" description="In Ref. 1; AAA23883." evidence="4" ref="1">
    <original>A</original>
    <variation>R</variation>
    <location>
        <position position="19"/>
    </location>
</feature>
<feature type="sequence conflict" description="In Ref. 1; AAA23883." evidence="4" ref="1">
    <original>AQ</original>
    <variation>E</variation>
    <location>
        <begin position="81"/>
        <end position="82"/>
    </location>
</feature>
<feature type="strand" evidence="6">
    <location>
        <begin position="2"/>
        <end position="8"/>
    </location>
</feature>
<feature type="helix" evidence="6">
    <location>
        <begin position="10"/>
        <end position="12"/>
    </location>
</feature>
<feature type="helix" evidence="6">
    <location>
        <begin position="13"/>
        <end position="23"/>
    </location>
</feature>
<feature type="strand" evidence="6">
    <location>
        <begin position="29"/>
        <end position="35"/>
    </location>
</feature>
<feature type="strand" evidence="5">
    <location>
        <begin position="50"/>
        <end position="52"/>
    </location>
</feature>
<feature type="strand" evidence="6">
    <location>
        <begin position="56"/>
        <end position="65"/>
    </location>
</feature>
<feature type="helix" evidence="6">
    <location>
        <begin position="67"/>
        <end position="69"/>
    </location>
</feature>
<feature type="helix" evidence="6">
    <location>
        <begin position="70"/>
        <end position="81"/>
    </location>
</feature>
<feature type="strand" evidence="6">
    <location>
        <begin position="91"/>
        <end position="95"/>
    </location>
</feature>
<feature type="turn" evidence="6">
    <location>
        <begin position="102"/>
        <end position="104"/>
    </location>
</feature>
<protein>
    <recommendedName>
        <fullName>Nitrogen regulatory protein P-II 1</fullName>
    </recommendedName>
</protein>
<organism>
    <name type="scientific">Escherichia coli (strain K12)</name>
    <dbReference type="NCBI Taxonomy" id="83333"/>
    <lineage>
        <taxon>Bacteria</taxon>
        <taxon>Pseudomonadati</taxon>
        <taxon>Pseudomonadota</taxon>
        <taxon>Gammaproteobacteria</taxon>
        <taxon>Enterobacterales</taxon>
        <taxon>Enterobacteriaceae</taxon>
        <taxon>Escherichia</taxon>
    </lineage>
</organism>
<gene>
    <name type="primary">glnB</name>
    <name type="ordered locus">b2553</name>
    <name type="ordered locus">JW2537</name>
</gene>
<accession>P0A9Z1</accession>
<accession>P05826</accession>
<keyword id="KW-0002">3D-structure</keyword>
<keyword id="KW-0547">Nucleotide-binding</keyword>
<keyword id="KW-0597">Phosphoprotein</keyword>
<keyword id="KW-1185">Reference proteome</keyword>
<keyword id="KW-0804">Transcription</keyword>
<keyword id="KW-0805">Transcription regulation</keyword>
<comment type="function">
    <text>P-II indirectly controls the transcription of the glutamine synthetase gene (glnA). P-II prevents NR-II-catalyzed conversion of NR-I to NR-I-phosphate, the transcriptional activator of GlnA. When P-II is uridylylated to P-II-UMP, these events are reversed. When the ratio of Gln to 2-ketoglutarate decreases, P-II is uridylylated to P-II-UMP, which causes the deadenylation of glutamine synthetase by GlnE, so activating the enzyme.</text>
</comment>
<comment type="subunit">
    <text evidence="3">Homotrimer.</text>
</comment>
<comment type="interaction">
    <interactant intactId="EBI-551053">
        <id>P0A9Z1</id>
    </interactant>
    <interactant intactId="EBI-551053">
        <id>P0A9Z1</id>
        <label>glnB</label>
    </interactant>
    <organismsDiffer>false</organismsDiffer>
    <experiments>4</experiments>
</comment>
<comment type="interaction">
    <interactant intactId="EBI-551053">
        <id>P0A9Z1</id>
    </interactant>
    <interactant intactId="EBI-552032">
        <id>P27249</id>
        <label>glnD</label>
    </interactant>
    <organismsDiffer>false</organismsDiffer>
    <experiments>3</experiments>
</comment>
<comment type="interaction">
    <interactant intactId="EBI-551053">
        <id>P0A9Z1</id>
    </interactant>
    <interactant intactId="EBI-559503">
        <id>P0AC55</id>
        <label>glnK</label>
    </interactant>
    <organismsDiffer>false</organismsDiffer>
    <experiments>3</experiments>
</comment>
<comment type="interaction">
    <interactant intactId="EBI-551053">
        <id>P0A9Z1</id>
    </interactant>
    <interactant intactId="EBI-701156">
        <id>P0AFB5</id>
        <label>glnL</label>
    </interactant>
    <organismsDiffer>false</organismsDiffer>
    <experiments>5</experiments>
</comment>
<comment type="interaction">
    <interactant intactId="EBI-551053">
        <id>P0A9Z1</id>
    </interactant>
    <interactant intactId="EBI-544031">
        <id>P0AF90</id>
        <label>rraB</label>
    </interactant>
    <organismsDiffer>false</organismsDiffer>
    <experiments>3</experiments>
</comment>
<comment type="PTM">
    <text>Uridylylated/deuridylylated by GlnD.</text>
</comment>
<comment type="similarity">
    <text evidence="1">Belongs to the P(II) protein family.</text>
</comment>
<comment type="sequence caution" evidence="4">
    <conflict type="frameshift">
        <sequence resource="EMBL-CDS" id="AAA23883"/>
    </conflict>
</comment>
<proteinExistence type="evidence at protein level"/>
<evidence type="ECO:0000255" key="1">
    <source>
        <dbReference type="PROSITE-ProRule" id="PRU00675"/>
    </source>
</evidence>
<evidence type="ECO:0000269" key="2">
    <source>
    </source>
</evidence>
<evidence type="ECO:0000269" key="3">
    <source>
    </source>
</evidence>
<evidence type="ECO:0000305" key="4"/>
<evidence type="ECO:0007829" key="5">
    <source>
        <dbReference type="PDB" id="1PIL"/>
    </source>
</evidence>
<evidence type="ECO:0007829" key="6">
    <source>
        <dbReference type="PDB" id="2PII"/>
    </source>
</evidence>
<reference key="1">
    <citation type="journal article" date="1987" name="J. Biol. Chem.">
        <title>Cascade control of Escherichia coli glutamine synthetase. Purification and properties of PII protein and nucleotide sequence of its structural gene.</title>
        <authorList>
            <person name="Son H.S."/>
            <person name="Rhee S.G."/>
        </authorList>
    </citation>
    <scope>NUCLEOTIDE SEQUENCE [GENOMIC DNA]</scope>
    <scope>URIDYLYLATION AT TYR-51</scope>
</reference>
<reference key="2">
    <citation type="journal article" date="1988" name="Mol. Gen. Genet.">
        <title>Identification of the Klebsiella pneumoniae glnB gene: nucleotide sequence of wild-type and mutant alleles.</title>
        <authorList>
            <person name="Holtel A."/>
            <person name="Merrick M."/>
        </authorList>
    </citation>
    <scope>SEQUENCE REVISION TO C-TERMINUS</scope>
</reference>
<reference key="3">
    <citation type="journal article" date="1991" name="Mol. Gen. Genet.">
        <title>Isolation and nucleotide sequence of the hmp gene that encodes a haemoglobin-like protein in Escherichia coli K-12.</title>
        <authorList>
            <person name="Vasudevan S.G."/>
            <person name="Armarego W.L.F."/>
            <person name="Shaw D.C."/>
            <person name="Lilley P.E."/>
            <person name="Dixon N.E."/>
            <person name="Poole R.K."/>
        </authorList>
    </citation>
    <scope>NUCLEOTIDE SEQUENCE [GENOMIC DNA]</scope>
    <source>
        <strain>K12</strain>
    </source>
</reference>
<reference key="4">
    <citation type="journal article" date="1993" name="J. Bacteriol.">
        <title>The glnB region of the Escherichia coli chromosome.</title>
        <authorList>
            <person name="Liu J."/>
            <person name="Magasanik B."/>
        </authorList>
    </citation>
    <scope>NUCLEOTIDE SEQUENCE [GENOMIC DNA]</scope>
</reference>
<reference key="5">
    <citation type="journal article" date="1997" name="DNA Res.">
        <title>Construction of a contiguous 874-kb sequence of the Escherichia coli-K12 genome corresponding to 50.0-68.8 min on the linkage map and analysis of its sequence features.</title>
        <authorList>
            <person name="Yamamoto Y."/>
            <person name="Aiba H."/>
            <person name="Baba T."/>
            <person name="Hayashi K."/>
            <person name="Inada T."/>
            <person name="Isono K."/>
            <person name="Itoh T."/>
            <person name="Kimura S."/>
            <person name="Kitagawa M."/>
            <person name="Makino K."/>
            <person name="Miki T."/>
            <person name="Mitsuhashi N."/>
            <person name="Mizobuchi K."/>
            <person name="Mori H."/>
            <person name="Nakade S."/>
            <person name="Nakamura Y."/>
            <person name="Nashimoto H."/>
            <person name="Oshima T."/>
            <person name="Oyama S."/>
            <person name="Saito N."/>
            <person name="Sampei G."/>
            <person name="Satoh Y."/>
            <person name="Sivasundaram S."/>
            <person name="Tagami H."/>
            <person name="Takahashi H."/>
            <person name="Takeda J."/>
            <person name="Takemoto K."/>
            <person name="Uehara K."/>
            <person name="Wada C."/>
            <person name="Yamagata S."/>
            <person name="Horiuchi T."/>
        </authorList>
    </citation>
    <scope>NUCLEOTIDE SEQUENCE [LARGE SCALE GENOMIC DNA]</scope>
    <source>
        <strain>K12 / W3110 / ATCC 27325 / DSM 5911</strain>
    </source>
</reference>
<reference key="6">
    <citation type="journal article" date="1997" name="Science">
        <title>The complete genome sequence of Escherichia coli K-12.</title>
        <authorList>
            <person name="Blattner F.R."/>
            <person name="Plunkett G. III"/>
            <person name="Bloch C.A."/>
            <person name="Perna N.T."/>
            <person name="Burland V."/>
            <person name="Riley M."/>
            <person name="Collado-Vides J."/>
            <person name="Glasner J.D."/>
            <person name="Rode C.K."/>
            <person name="Mayhew G.F."/>
            <person name="Gregor J."/>
            <person name="Davis N.W."/>
            <person name="Kirkpatrick H.A."/>
            <person name="Goeden M.A."/>
            <person name="Rose D.J."/>
            <person name="Mau B."/>
            <person name="Shao Y."/>
        </authorList>
    </citation>
    <scope>NUCLEOTIDE SEQUENCE [LARGE SCALE GENOMIC DNA]</scope>
    <source>
        <strain>K12 / MG1655 / ATCC 47076</strain>
    </source>
</reference>
<reference key="7">
    <citation type="journal article" date="2006" name="Mol. Syst. Biol.">
        <title>Highly accurate genome sequences of Escherichia coli K-12 strains MG1655 and W3110.</title>
        <authorList>
            <person name="Hayashi K."/>
            <person name="Morooka N."/>
            <person name="Yamamoto Y."/>
            <person name="Fujita K."/>
            <person name="Isono K."/>
            <person name="Choi S."/>
            <person name="Ohtsubo E."/>
            <person name="Baba T."/>
            <person name="Wanner B.L."/>
            <person name="Mori H."/>
            <person name="Horiuchi T."/>
        </authorList>
    </citation>
    <scope>NUCLEOTIDE SEQUENCE [LARGE SCALE GENOMIC DNA]</scope>
    <source>
        <strain>K12 / W3110 / ATCC 27325 / DSM 5911</strain>
    </source>
</reference>
<reference key="8">
    <citation type="journal article" date="1993" name="Mol. Microbiol.">
        <title>The genes of the glutamine synthetase adenylylation cascade are not regulated by nitrogen in Escherichia coli.</title>
        <authorList>
            <person name="van Heeswijk W.C."/>
            <person name="Rabenberg M."/>
            <person name="Westerhoff H.V."/>
            <person name="Kahn D.D."/>
        </authorList>
    </citation>
    <scope>NUCLEOTIDE SEQUENCE [GENOMIC DNA] OF 1-12</scope>
    <source>
        <strain>K12 / W3110 / ATCC 27325 / DSM 5911</strain>
    </source>
</reference>
<reference key="9">
    <citation type="journal article" date="1989" name="Biochimie">
        <title>Regulation of transcription of the glnALG operon of Escherichia coli by protein phosphorylation.</title>
        <authorList>
            <person name="Magasanik B."/>
        </authorList>
    </citation>
    <scope>REVIEW</scope>
</reference>
<reference key="10">
    <citation type="journal article" date="1994" name="FEBS Lett.">
        <title>Escherichia coli PII protein: purification, crystallization and oligomeric structure.</title>
        <authorList>
            <person name="Vasudevan S.G."/>
            <person name="Gedye C."/>
            <person name="Dixon N.E."/>
            <person name="Cheah E."/>
            <person name="Carr P.D."/>
            <person name="Suffolk P.M."/>
            <person name="Jeffrey P.D."/>
            <person name="Ollis D.L."/>
        </authorList>
    </citation>
    <scope>CRYSTALLIZATION</scope>
    <scope>SUBUNIT</scope>
</reference>
<reference key="11">
    <citation type="journal article" date="1997" name="Electrophoresis">
        <title>Escherichia coli proteome analysis using the gene-protein database.</title>
        <authorList>
            <person name="VanBogelen R.A."/>
            <person name="Abshire K.Z."/>
            <person name="Moldover B."/>
            <person name="Olson E.R."/>
            <person name="Neidhardt F.C."/>
        </authorList>
    </citation>
    <scope>IDENTIFICATION BY 2D-GEL</scope>
</reference>
<reference key="12">
    <citation type="journal article" date="1994" name="Structure">
        <title>Structure of the Escherichia coli signal transducing protein PII.</title>
        <authorList>
            <person name="Cheah E."/>
            <person name="Carr P.D."/>
            <person name="Suffolk P.M."/>
            <person name="Vasuvedan S.G."/>
            <person name="Dixon N.E."/>
            <person name="Ollis D.L."/>
        </authorList>
    </citation>
    <scope>X-RAY CRYSTALLOGRAPHY (2.7 ANGSTROMS)</scope>
</reference>
<reference key="13">
    <citation type="journal article" date="1996" name="Acta Crystallogr. D">
        <title>X-ray structure of the signal transduction protein from Escherichia coli at 1.9 A.</title>
        <authorList>
            <person name="Carr P.D."/>
            <person name="Cheah E."/>
            <person name="Suffolk P.M."/>
            <person name="Vasudevan S.G."/>
            <person name="Dixon N.E."/>
            <person name="Ollis D.L."/>
        </authorList>
    </citation>
    <scope>X-RAY CRYSTALLOGRAPHY (1.9 ANGSTROMS)</scope>
</reference>
<dbReference type="EMBL" id="M16778">
    <property type="protein sequence ID" value="AAA23883.1"/>
    <property type="status" value="ALT_FRAME"/>
    <property type="molecule type" value="Genomic_DNA"/>
</dbReference>
<dbReference type="EMBL" id="X58872">
    <property type="protein sequence ID" value="CAA41683.1"/>
    <property type="molecule type" value="Genomic_DNA"/>
</dbReference>
<dbReference type="EMBL" id="S67014">
    <property type="protein sequence ID" value="AAB28779.1"/>
    <property type="molecule type" value="Genomic_DNA"/>
</dbReference>
<dbReference type="EMBL" id="U00096">
    <property type="protein sequence ID" value="AAC75606.1"/>
    <property type="molecule type" value="Genomic_DNA"/>
</dbReference>
<dbReference type="EMBL" id="AP009048">
    <property type="protein sequence ID" value="BAA16461.1"/>
    <property type="molecule type" value="Genomic_DNA"/>
</dbReference>
<dbReference type="EMBL" id="Z21843">
    <property type="protein sequence ID" value="CAA79890.1"/>
    <property type="molecule type" value="Genomic_DNA"/>
</dbReference>
<dbReference type="PIR" id="C49940">
    <property type="entry name" value="RGECP2"/>
</dbReference>
<dbReference type="RefSeq" id="NP_417048.1">
    <property type="nucleotide sequence ID" value="NC_000913.3"/>
</dbReference>
<dbReference type="RefSeq" id="WP_000717694.1">
    <property type="nucleotide sequence ID" value="NZ_STEB01000011.1"/>
</dbReference>
<dbReference type="PDB" id="1PIL">
    <property type="method" value="X-ray"/>
    <property type="resolution" value="2.70 A"/>
    <property type="chains" value="A=1-112"/>
</dbReference>
<dbReference type="PDB" id="2PII">
    <property type="method" value="X-ray"/>
    <property type="resolution" value="1.90 A"/>
    <property type="chains" value="A=1-112"/>
</dbReference>
<dbReference type="PDB" id="5L9N">
    <property type="method" value="X-ray"/>
    <property type="resolution" value="1.90 A"/>
    <property type="chains" value="A=1-112"/>
</dbReference>
<dbReference type="PDBsum" id="1PIL"/>
<dbReference type="PDBsum" id="2PII"/>
<dbReference type="PDBsum" id="5L9N"/>
<dbReference type="SMR" id="P0A9Z1"/>
<dbReference type="BioGRID" id="4259201">
    <property type="interactions" value="50"/>
</dbReference>
<dbReference type="BioGRID" id="851355">
    <property type="interactions" value="6"/>
</dbReference>
<dbReference type="DIP" id="DIP-35005N"/>
<dbReference type="FunCoup" id="P0A9Z1">
    <property type="interactions" value="713"/>
</dbReference>
<dbReference type="IntAct" id="P0A9Z1">
    <property type="interactions" value="18"/>
</dbReference>
<dbReference type="STRING" id="511145.b2553"/>
<dbReference type="jPOST" id="P0A9Z1"/>
<dbReference type="PaxDb" id="511145-b2553"/>
<dbReference type="EnsemblBacteria" id="AAC75606">
    <property type="protein sequence ID" value="AAC75606"/>
    <property type="gene ID" value="b2553"/>
</dbReference>
<dbReference type="GeneID" id="93774582"/>
<dbReference type="GeneID" id="947016"/>
<dbReference type="KEGG" id="ecj:JW2537"/>
<dbReference type="KEGG" id="eco:b2553"/>
<dbReference type="KEGG" id="ecoc:C3026_14135"/>
<dbReference type="PATRIC" id="fig|1411691.4.peg.4181"/>
<dbReference type="EchoBASE" id="EB0379"/>
<dbReference type="eggNOG" id="COG0347">
    <property type="taxonomic scope" value="Bacteria"/>
</dbReference>
<dbReference type="HOGENOM" id="CLU_082268_0_0_6"/>
<dbReference type="InParanoid" id="P0A9Z1"/>
<dbReference type="OMA" id="VECIIRP"/>
<dbReference type="OrthoDB" id="9802729at2"/>
<dbReference type="PhylomeDB" id="P0A9Z1"/>
<dbReference type="BioCyc" id="EcoCyc:PROTEIN-PII"/>
<dbReference type="BioCyc" id="MetaCyc:PROTEIN-PII"/>
<dbReference type="EvolutionaryTrace" id="P0A9Z1"/>
<dbReference type="PRO" id="PR:P0A9Z1"/>
<dbReference type="Proteomes" id="UP000000625">
    <property type="component" value="Chromosome"/>
</dbReference>
<dbReference type="GO" id="GO:0005829">
    <property type="term" value="C:cytosol"/>
    <property type="evidence" value="ECO:0000314"/>
    <property type="project" value="EcoCyc"/>
</dbReference>
<dbReference type="GO" id="GO:0005524">
    <property type="term" value="F:ATP binding"/>
    <property type="evidence" value="ECO:0000314"/>
    <property type="project" value="EcoCyc"/>
</dbReference>
<dbReference type="GO" id="GO:0008047">
    <property type="term" value="F:enzyme activator activity"/>
    <property type="evidence" value="ECO:0000314"/>
    <property type="project" value="EcoCyc"/>
</dbReference>
<dbReference type="GO" id="GO:0030234">
    <property type="term" value="F:enzyme regulator activity"/>
    <property type="evidence" value="ECO:0000314"/>
    <property type="project" value="EcoCyc"/>
</dbReference>
<dbReference type="GO" id="GO:0042802">
    <property type="term" value="F:identical protein binding"/>
    <property type="evidence" value="ECO:0000353"/>
    <property type="project" value="IntAct"/>
</dbReference>
<dbReference type="GO" id="GO:0036094">
    <property type="term" value="F:small molecule binding"/>
    <property type="evidence" value="ECO:0000314"/>
    <property type="project" value="EcoCyc"/>
</dbReference>
<dbReference type="GO" id="GO:0042304">
    <property type="term" value="P:regulation of fatty acid biosynthetic process"/>
    <property type="evidence" value="ECO:0000314"/>
    <property type="project" value="EcoCyc"/>
</dbReference>
<dbReference type="GO" id="GO:0006808">
    <property type="term" value="P:regulation of nitrogen utilization"/>
    <property type="evidence" value="ECO:0000314"/>
    <property type="project" value="EcoCyc"/>
</dbReference>
<dbReference type="FunFam" id="3.30.70.120:FF:000001">
    <property type="entry name" value="Nitrogen regulatory protein P-II"/>
    <property type="match status" value="1"/>
</dbReference>
<dbReference type="Gene3D" id="3.30.70.120">
    <property type="match status" value="1"/>
</dbReference>
<dbReference type="InterPro" id="IPR002187">
    <property type="entry name" value="N-reg_PII"/>
</dbReference>
<dbReference type="InterPro" id="IPR011322">
    <property type="entry name" value="N-reg_PII-like_a/b"/>
</dbReference>
<dbReference type="InterPro" id="IPR015867">
    <property type="entry name" value="N-reg_PII/ATP_PRibTrfase_C"/>
</dbReference>
<dbReference type="InterPro" id="IPR017918">
    <property type="entry name" value="N-reg_PII_CS"/>
</dbReference>
<dbReference type="InterPro" id="IPR002332">
    <property type="entry name" value="N-reg_PII_urydylation_site"/>
</dbReference>
<dbReference type="NCBIfam" id="NF008111">
    <property type="entry name" value="PRK10858.1"/>
    <property type="match status" value="1"/>
</dbReference>
<dbReference type="PANTHER" id="PTHR30115">
    <property type="entry name" value="NITROGEN REGULATORY PROTEIN P-II"/>
    <property type="match status" value="1"/>
</dbReference>
<dbReference type="PANTHER" id="PTHR30115:SF11">
    <property type="entry name" value="NITROGEN REGULATORY PROTEIN P-II HOMOLOG"/>
    <property type="match status" value="1"/>
</dbReference>
<dbReference type="Pfam" id="PF00543">
    <property type="entry name" value="P-II"/>
    <property type="match status" value="1"/>
</dbReference>
<dbReference type="PIRSF" id="PIRSF039144">
    <property type="entry name" value="GlnB"/>
    <property type="match status" value="1"/>
</dbReference>
<dbReference type="PRINTS" id="PR00340">
    <property type="entry name" value="PIIGLNB"/>
</dbReference>
<dbReference type="SMART" id="SM00938">
    <property type="entry name" value="P-II"/>
    <property type="match status" value="1"/>
</dbReference>
<dbReference type="SUPFAM" id="SSF54913">
    <property type="entry name" value="GlnB-like"/>
    <property type="match status" value="1"/>
</dbReference>
<dbReference type="PROSITE" id="PS00638">
    <property type="entry name" value="PII_GLNB_CTER"/>
    <property type="match status" value="1"/>
</dbReference>
<dbReference type="PROSITE" id="PS51343">
    <property type="entry name" value="PII_GLNB_DOM"/>
    <property type="match status" value="1"/>
</dbReference>
<dbReference type="PROSITE" id="PS00496">
    <property type="entry name" value="PII_GLNB_UMP"/>
    <property type="match status" value="1"/>
</dbReference>
<name>GLNB_ECOLI</name>